<evidence type="ECO:0000255" key="1">
    <source>
        <dbReference type="HAMAP-Rule" id="MF_01454"/>
    </source>
</evidence>
<evidence type="ECO:0000255" key="2">
    <source>
        <dbReference type="PROSITE-ProRule" id="PRU01231"/>
    </source>
</evidence>
<sequence length="391" mass="43140">MKFIDEALIRVEAGDGGNGCVSFRREKYIPKGGPDGGDGGDGGDVYLIADENLNTLIDYRFEKRYAAGRGENGRSAGCTGHRGNDITLRVPVGTRAIDNDTQEVIGDLTKHGMKMLVAKGGYHGLGNTRFKSSVNRAPRQKTNGTPGEKRDLLLELMLLADVGMLGLPNAGKSTFIRAVSAAKPKVADYPFTTLVPSLGVARVGADRSFVVADIPGLIEGAADGAGLGIRFLKHLERCRVLIHLVDIMPIDESDPAQNISVIESELYQYSEKLSEKPTWLVFNKIDTIGEEEAQARAQEIAEQIGWEGDYYLISAATGQNVQNLTRDIMDFIEANPREVAEENTEADEVKFKWDDYHQQAMQNPIEEDWDDFDDDWSEEDEEGVEFVYTRS</sequence>
<keyword id="KW-0963">Cytoplasm</keyword>
<keyword id="KW-0342">GTP-binding</keyword>
<keyword id="KW-0378">Hydrolase</keyword>
<keyword id="KW-0460">Magnesium</keyword>
<keyword id="KW-0479">Metal-binding</keyword>
<keyword id="KW-0547">Nucleotide-binding</keyword>
<comment type="function">
    <text evidence="1">An essential GTPase which binds GTP, GDP and possibly (p)ppGpp with moderate affinity, with high nucleotide exchange rates and a fairly low GTP hydrolysis rate. Plays a role in control of the cell cycle, stress response, ribosome biogenesis and in those bacteria that undergo differentiation, in morphogenesis control.</text>
</comment>
<comment type="cofactor">
    <cofactor evidence="1">
        <name>Mg(2+)</name>
        <dbReference type="ChEBI" id="CHEBI:18420"/>
    </cofactor>
</comment>
<comment type="subunit">
    <text evidence="1">Monomer.</text>
</comment>
<comment type="subcellular location">
    <subcellularLocation>
        <location evidence="1">Cytoplasm</location>
    </subcellularLocation>
</comment>
<comment type="similarity">
    <text evidence="1">Belongs to the TRAFAC class OBG-HflX-like GTPase superfamily. OBG GTPase family.</text>
</comment>
<organism>
    <name type="scientific">Actinobacillus pleuropneumoniae serotype 7 (strain AP76)</name>
    <dbReference type="NCBI Taxonomy" id="537457"/>
    <lineage>
        <taxon>Bacteria</taxon>
        <taxon>Pseudomonadati</taxon>
        <taxon>Pseudomonadota</taxon>
        <taxon>Gammaproteobacteria</taxon>
        <taxon>Pasteurellales</taxon>
        <taxon>Pasteurellaceae</taxon>
        <taxon>Actinobacillus</taxon>
    </lineage>
</organism>
<gene>
    <name evidence="1" type="primary">obg</name>
    <name type="ordered locus">APP7_0040</name>
</gene>
<feature type="chain" id="PRO_0000385674" description="GTPase Obg">
    <location>
        <begin position="1"/>
        <end position="391"/>
    </location>
</feature>
<feature type="domain" description="Obg" evidence="2">
    <location>
        <begin position="1"/>
        <end position="159"/>
    </location>
</feature>
<feature type="domain" description="OBG-type G" evidence="1">
    <location>
        <begin position="160"/>
        <end position="333"/>
    </location>
</feature>
<feature type="binding site" evidence="1">
    <location>
        <begin position="166"/>
        <end position="173"/>
    </location>
    <ligand>
        <name>GTP</name>
        <dbReference type="ChEBI" id="CHEBI:37565"/>
    </ligand>
</feature>
<feature type="binding site" evidence="1">
    <location>
        <position position="173"/>
    </location>
    <ligand>
        <name>Mg(2+)</name>
        <dbReference type="ChEBI" id="CHEBI:18420"/>
    </ligand>
</feature>
<feature type="binding site" evidence="1">
    <location>
        <begin position="191"/>
        <end position="195"/>
    </location>
    <ligand>
        <name>GTP</name>
        <dbReference type="ChEBI" id="CHEBI:37565"/>
    </ligand>
</feature>
<feature type="binding site" evidence="1">
    <location>
        <position position="193"/>
    </location>
    <ligand>
        <name>Mg(2+)</name>
        <dbReference type="ChEBI" id="CHEBI:18420"/>
    </ligand>
</feature>
<feature type="binding site" evidence="1">
    <location>
        <begin position="213"/>
        <end position="216"/>
    </location>
    <ligand>
        <name>GTP</name>
        <dbReference type="ChEBI" id="CHEBI:37565"/>
    </ligand>
</feature>
<feature type="binding site" evidence="1">
    <location>
        <begin position="283"/>
        <end position="286"/>
    </location>
    <ligand>
        <name>GTP</name>
        <dbReference type="ChEBI" id="CHEBI:37565"/>
    </ligand>
</feature>
<feature type="binding site" evidence="1">
    <location>
        <begin position="314"/>
        <end position="316"/>
    </location>
    <ligand>
        <name>GTP</name>
        <dbReference type="ChEBI" id="CHEBI:37565"/>
    </ligand>
</feature>
<reference key="1">
    <citation type="submission" date="2008-06" db="EMBL/GenBank/DDBJ databases">
        <title>Genome and proteome analysis of A. pleuropneumoniae serotype 7.</title>
        <authorList>
            <person name="Linke B."/>
            <person name="Buettner F."/>
            <person name="Martinez-Arias R."/>
            <person name="Goesmann A."/>
            <person name="Baltes N."/>
            <person name="Tegetmeyer H."/>
            <person name="Singh M."/>
            <person name="Gerlach G.F."/>
        </authorList>
    </citation>
    <scope>NUCLEOTIDE SEQUENCE [LARGE SCALE GENOMIC DNA]</scope>
    <source>
        <strain>AP76</strain>
    </source>
</reference>
<proteinExistence type="inferred from homology"/>
<protein>
    <recommendedName>
        <fullName evidence="1">GTPase Obg</fullName>
        <ecNumber evidence="1">3.6.5.-</ecNumber>
    </recommendedName>
    <alternativeName>
        <fullName evidence="1">GTP-binding protein Obg</fullName>
    </alternativeName>
</protein>
<dbReference type="EC" id="3.6.5.-" evidence="1"/>
<dbReference type="EMBL" id="CP001091">
    <property type="protein sequence ID" value="ACE60692.1"/>
    <property type="molecule type" value="Genomic_DNA"/>
</dbReference>
<dbReference type="SMR" id="B3GZN0"/>
<dbReference type="KEGG" id="apa:APP7_0040"/>
<dbReference type="HOGENOM" id="CLU_011747_2_0_6"/>
<dbReference type="Proteomes" id="UP000001226">
    <property type="component" value="Chromosome"/>
</dbReference>
<dbReference type="GO" id="GO:0005737">
    <property type="term" value="C:cytoplasm"/>
    <property type="evidence" value="ECO:0007669"/>
    <property type="project" value="UniProtKB-SubCell"/>
</dbReference>
<dbReference type="GO" id="GO:0005525">
    <property type="term" value="F:GTP binding"/>
    <property type="evidence" value="ECO:0007669"/>
    <property type="project" value="UniProtKB-UniRule"/>
</dbReference>
<dbReference type="GO" id="GO:0003924">
    <property type="term" value="F:GTPase activity"/>
    <property type="evidence" value="ECO:0007669"/>
    <property type="project" value="UniProtKB-UniRule"/>
</dbReference>
<dbReference type="GO" id="GO:0000287">
    <property type="term" value="F:magnesium ion binding"/>
    <property type="evidence" value="ECO:0007669"/>
    <property type="project" value="InterPro"/>
</dbReference>
<dbReference type="GO" id="GO:0042254">
    <property type="term" value="P:ribosome biogenesis"/>
    <property type="evidence" value="ECO:0007669"/>
    <property type="project" value="UniProtKB-UniRule"/>
</dbReference>
<dbReference type="CDD" id="cd01898">
    <property type="entry name" value="Obg"/>
    <property type="match status" value="1"/>
</dbReference>
<dbReference type="FunFam" id="2.70.210.12:FF:000001">
    <property type="entry name" value="GTPase Obg"/>
    <property type="match status" value="1"/>
</dbReference>
<dbReference type="Gene3D" id="2.70.210.12">
    <property type="entry name" value="GTP1/OBG domain"/>
    <property type="match status" value="1"/>
</dbReference>
<dbReference type="Gene3D" id="3.40.50.300">
    <property type="entry name" value="P-loop containing nucleotide triphosphate hydrolases"/>
    <property type="match status" value="1"/>
</dbReference>
<dbReference type="HAMAP" id="MF_01454">
    <property type="entry name" value="GTPase_Obg"/>
    <property type="match status" value="1"/>
</dbReference>
<dbReference type="InterPro" id="IPR031167">
    <property type="entry name" value="G_OBG"/>
</dbReference>
<dbReference type="InterPro" id="IPR006073">
    <property type="entry name" value="GTP-bd"/>
</dbReference>
<dbReference type="InterPro" id="IPR014100">
    <property type="entry name" value="GTP-bd_Obg/CgtA"/>
</dbReference>
<dbReference type="InterPro" id="IPR006074">
    <property type="entry name" value="GTP1-OBG_CS"/>
</dbReference>
<dbReference type="InterPro" id="IPR006169">
    <property type="entry name" value="GTP1_OBG_dom"/>
</dbReference>
<dbReference type="InterPro" id="IPR036726">
    <property type="entry name" value="GTP1_OBG_dom_sf"/>
</dbReference>
<dbReference type="InterPro" id="IPR045086">
    <property type="entry name" value="OBG_GTPase"/>
</dbReference>
<dbReference type="InterPro" id="IPR027417">
    <property type="entry name" value="P-loop_NTPase"/>
</dbReference>
<dbReference type="NCBIfam" id="TIGR02729">
    <property type="entry name" value="Obg_CgtA"/>
    <property type="match status" value="1"/>
</dbReference>
<dbReference type="NCBIfam" id="NF008955">
    <property type="entry name" value="PRK12297.1"/>
    <property type="match status" value="1"/>
</dbReference>
<dbReference type="NCBIfam" id="NF008956">
    <property type="entry name" value="PRK12299.1"/>
    <property type="match status" value="1"/>
</dbReference>
<dbReference type="PANTHER" id="PTHR11702">
    <property type="entry name" value="DEVELOPMENTALLY REGULATED GTP-BINDING PROTEIN-RELATED"/>
    <property type="match status" value="1"/>
</dbReference>
<dbReference type="PANTHER" id="PTHR11702:SF31">
    <property type="entry name" value="MITOCHONDRIAL RIBOSOME-ASSOCIATED GTPASE 2"/>
    <property type="match status" value="1"/>
</dbReference>
<dbReference type="Pfam" id="PF01018">
    <property type="entry name" value="GTP1_OBG"/>
    <property type="match status" value="1"/>
</dbReference>
<dbReference type="Pfam" id="PF01926">
    <property type="entry name" value="MMR_HSR1"/>
    <property type="match status" value="1"/>
</dbReference>
<dbReference type="PIRSF" id="PIRSF002401">
    <property type="entry name" value="GTP_bd_Obg/CgtA"/>
    <property type="match status" value="1"/>
</dbReference>
<dbReference type="PRINTS" id="PR00326">
    <property type="entry name" value="GTP1OBG"/>
</dbReference>
<dbReference type="SUPFAM" id="SSF82051">
    <property type="entry name" value="Obg GTP-binding protein N-terminal domain"/>
    <property type="match status" value="1"/>
</dbReference>
<dbReference type="SUPFAM" id="SSF52540">
    <property type="entry name" value="P-loop containing nucleoside triphosphate hydrolases"/>
    <property type="match status" value="1"/>
</dbReference>
<dbReference type="PROSITE" id="PS51710">
    <property type="entry name" value="G_OBG"/>
    <property type="match status" value="1"/>
</dbReference>
<dbReference type="PROSITE" id="PS00905">
    <property type="entry name" value="GTP1_OBG"/>
    <property type="match status" value="1"/>
</dbReference>
<dbReference type="PROSITE" id="PS51883">
    <property type="entry name" value="OBG"/>
    <property type="match status" value="1"/>
</dbReference>
<accession>B3GZN0</accession>
<name>OBG_ACTP7</name>